<keyword id="KW-1185">Reference proteome</keyword>
<protein>
    <recommendedName>
        <fullName>Sperm protein associated with the nucleus on the X chromosome N1</fullName>
    </recommendedName>
    <alternativeName>
        <fullName>Nuclear-associated protein SPAN-Xn1</fullName>
        <shortName>SPANX-N1</shortName>
    </alternativeName>
    <alternativeName>
        <fullName>SPANX family member N1</fullName>
    </alternativeName>
</protein>
<proteinExistence type="inferred from homology"/>
<dbReference type="EMBL" id="AY825029">
    <property type="protein sequence ID" value="AAV97585.1"/>
    <property type="molecule type" value="Genomic_DNA"/>
</dbReference>
<dbReference type="EMBL" id="DQ336121">
    <property type="protein sequence ID" value="ABC61872.1"/>
    <property type="molecule type" value="mRNA"/>
</dbReference>
<dbReference type="EMBL" id="DQ336118">
    <property type="protein sequence ID" value="ABC61869.1"/>
    <property type="molecule type" value="mRNA"/>
</dbReference>
<dbReference type="EMBL" id="DQ336119">
    <property type="protein sequence ID" value="ABC61870.1"/>
    <property type="molecule type" value="mRNA"/>
</dbReference>
<dbReference type="EMBL" id="DQ336120">
    <property type="protein sequence ID" value="ABC61871.1"/>
    <property type="molecule type" value="mRNA"/>
</dbReference>
<dbReference type="EMBL" id="AL356499">
    <property type="status" value="NOT_ANNOTATED_CDS"/>
    <property type="molecule type" value="Genomic_DNA"/>
</dbReference>
<dbReference type="EMBL" id="AL713923">
    <property type="status" value="NOT_ANNOTATED_CDS"/>
    <property type="molecule type" value="Genomic_DNA"/>
</dbReference>
<dbReference type="CCDS" id="CCDS35421.1"/>
<dbReference type="RefSeq" id="NP_001009614.1">
    <property type="nucleotide sequence ID" value="NM_001009614.3"/>
</dbReference>
<dbReference type="STRING" id="9606.ENSP00000359524"/>
<dbReference type="GlyGen" id="Q5VSR9">
    <property type="glycosylation" value="1 site, 1 O-linked glycan (1 site)"/>
</dbReference>
<dbReference type="iPTMnet" id="Q5VSR9"/>
<dbReference type="PhosphoSitePlus" id="Q5VSR9"/>
<dbReference type="BioMuta" id="SPANXN1"/>
<dbReference type="DMDM" id="74746835"/>
<dbReference type="MassIVE" id="Q5VSR9"/>
<dbReference type="PaxDb" id="9606-ENSP00000359524"/>
<dbReference type="DNASU" id="494118"/>
<dbReference type="Ensembl" id="ENST00000370493.4">
    <property type="protein sequence ID" value="ENSP00000359524.3"/>
    <property type="gene ID" value="ENSG00000203923.5"/>
</dbReference>
<dbReference type="GeneID" id="494118"/>
<dbReference type="KEGG" id="hsa:494118"/>
<dbReference type="MANE-Select" id="ENST00000370493.4">
    <property type="protein sequence ID" value="ENSP00000359524.3"/>
    <property type="RefSeq nucleotide sequence ID" value="NM_001009614.3"/>
    <property type="RefSeq protein sequence ID" value="NP_001009614.1"/>
</dbReference>
<dbReference type="UCSC" id="uc004fcb.3">
    <property type="organism name" value="human"/>
</dbReference>
<dbReference type="AGR" id="HGNC:33174"/>
<dbReference type="CTD" id="494118"/>
<dbReference type="DisGeNET" id="494118"/>
<dbReference type="GeneCards" id="SPANXN1"/>
<dbReference type="HGNC" id="HGNC:33174">
    <property type="gene designation" value="SPANXN1"/>
</dbReference>
<dbReference type="HPA" id="ENSG00000203923">
    <property type="expression patterns" value="Tissue enriched (testis)"/>
</dbReference>
<dbReference type="MIM" id="300664">
    <property type="type" value="gene"/>
</dbReference>
<dbReference type="neXtProt" id="NX_Q5VSR9"/>
<dbReference type="OpenTargets" id="ENSG00000203923"/>
<dbReference type="PharmGKB" id="PA162404376"/>
<dbReference type="VEuPathDB" id="HostDB:ENSG00000203923"/>
<dbReference type="eggNOG" id="ENOG502RXMW">
    <property type="taxonomic scope" value="Eukaryota"/>
</dbReference>
<dbReference type="GeneTree" id="ENSGT00940000164738"/>
<dbReference type="HOGENOM" id="CLU_140435_1_0_1"/>
<dbReference type="InParanoid" id="Q5VSR9"/>
<dbReference type="OMA" id="AFCYRKA"/>
<dbReference type="OrthoDB" id="9531421at2759"/>
<dbReference type="PAN-GO" id="Q5VSR9">
    <property type="GO annotations" value="0 GO annotations based on evolutionary models"/>
</dbReference>
<dbReference type="PhylomeDB" id="Q5VSR9"/>
<dbReference type="TreeFam" id="TF341404"/>
<dbReference type="PathwayCommons" id="Q5VSR9"/>
<dbReference type="SignaLink" id="Q5VSR9"/>
<dbReference type="BioGRID-ORCS" id="494118">
    <property type="hits" value="10 hits in 649 CRISPR screens"/>
</dbReference>
<dbReference type="GenomeRNAi" id="494118"/>
<dbReference type="Pharos" id="Q5VSR9">
    <property type="development level" value="Tdark"/>
</dbReference>
<dbReference type="PRO" id="PR:Q5VSR9"/>
<dbReference type="Proteomes" id="UP000005640">
    <property type="component" value="Chromosome X"/>
</dbReference>
<dbReference type="RNAct" id="Q5VSR9">
    <property type="molecule type" value="protein"/>
</dbReference>
<dbReference type="Bgee" id="ENSG00000203923">
    <property type="expression patterns" value="Expressed in male germ line stem cell (sensu Vertebrata) in testis and 3 other cell types or tissues"/>
</dbReference>
<dbReference type="InterPro" id="IPR010007">
    <property type="entry name" value="SPAN-X_fam"/>
</dbReference>
<dbReference type="Pfam" id="PF07458">
    <property type="entry name" value="SPAN-X"/>
    <property type="match status" value="1"/>
</dbReference>
<comment type="similarity">
    <text evidence="2">Belongs to the SPAN-X family.</text>
</comment>
<name>SPXN1_HUMAN</name>
<gene>
    <name type="primary">SPANXN1</name>
</gene>
<accession>Q5VSR9</accession>
<organism>
    <name type="scientific">Homo sapiens</name>
    <name type="common">Human</name>
    <dbReference type="NCBI Taxonomy" id="9606"/>
    <lineage>
        <taxon>Eukaryota</taxon>
        <taxon>Metazoa</taxon>
        <taxon>Chordata</taxon>
        <taxon>Craniata</taxon>
        <taxon>Vertebrata</taxon>
        <taxon>Euteleostomi</taxon>
        <taxon>Mammalia</taxon>
        <taxon>Eutheria</taxon>
        <taxon>Euarchontoglires</taxon>
        <taxon>Primates</taxon>
        <taxon>Haplorrhini</taxon>
        <taxon>Catarrhini</taxon>
        <taxon>Hominidae</taxon>
        <taxon>Homo</taxon>
    </lineage>
</organism>
<sequence length="72" mass="8263">MEQPTSSINGEKRKSPCESNNENDEMQETPNRDLAPEPSLKKMKTSEYSTVLAFCYRKAKKIHSNQLENDQS</sequence>
<evidence type="ECO:0000256" key="1">
    <source>
        <dbReference type="SAM" id="MobiDB-lite"/>
    </source>
</evidence>
<evidence type="ECO:0000305" key="2"/>
<reference key="1">
    <citation type="journal article" date="2004" name="Proc. Natl. Acad. Sci. U.S.A.">
        <title>The SPANX gene family of cancer/testis-specific antigens: rapid evolution and amplification in African great apes and hominids.</title>
        <authorList>
            <person name="Kouprina N."/>
            <person name="Mullokandov M."/>
            <person name="Rogozin I.B."/>
            <person name="Collins N.K."/>
            <person name="Solomon G."/>
            <person name="Otstot J."/>
            <person name="Risinger J.I."/>
            <person name="Koonin E.V."/>
            <person name="Barrett J.C."/>
            <person name="Larionov V."/>
        </authorList>
    </citation>
    <scope>NUCLEOTIDE SEQUENCE [GENOMIC DNA]</scope>
</reference>
<reference key="2">
    <citation type="journal article" date="2005" name="Genome Res.">
        <title>Dynamic structure of the SPANX gene cluster mapped to the prostate cancer susceptibility locus HPCX at Xq27.</title>
        <authorList>
            <person name="Kouprina N."/>
            <person name="Pavlicek A."/>
            <person name="Noskov V.N."/>
            <person name="Solomon G."/>
            <person name="Otstot J."/>
            <person name="Isaacs W."/>
            <person name="Carpten J.D."/>
            <person name="Trent J.M."/>
            <person name="Schleutker J."/>
            <person name="Barrett J.C."/>
            <person name="Jurka J."/>
            <person name="Larionov V."/>
        </authorList>
    </citation>
    <scope>NUCLEOTIDE SEQUENCE [MRNA]</scope>
</reference>
<reference key="3">
    <citation type="journal article" date="2005" name="Nature">
        <title>The DNA sequence of the human X chromosome.</title>
        <authorList>
            <person name="Ross M.T."/>
            <person name="Grafham D.V."/>
            <person name="Coffey A.J."/>
            <person name="Scherer S."/>
            <person name="McLay K."/>
            <person name="Muzny D."/>
            <person name="Platzer M."/>
            <person name="Howell G.R."/>
            <person name="Burrows C."/>
            <person name="Bird C.P."/>
            <person name="Frankish A."/>
            <person name="Lovell F.L."/>
            <person name="Howe K.L."/>
            <person name="Ashurst J.L."/>
            <person name="Fulton R.S."/>
            <person name="Sudbrak R."/>
            <person name="Wen G."/>
            <person name="Jones M.C."/>
            <person name="Hurles M.E."/>
            <person name="Andrews T.D."/>
            <person name="Scott C.E."/>
            <person name="Searle S."/>
            <person name="Ramser J."/>
            <person name="Whittaker A."/>
            <person name="Deadman R."/>
            <person name="Carter N.P."/>
            <person name="Hunt S.E."/>
            <person name="Chen R."/>
            <person name="Cree A."/>
            <person name="Gunaratne P."/>
            <person name="Havlak P."/>
            <person name="Hodgson A."/>
            <person name="Metzker M.L."/>
            <person name="Richards S."/>
            <person name="Scott G."/>
            <person name="Steffen D."/>
            <person name="Sodergren E."/>
            <person name="Wheeler D.A."/>
            <person name="Worley K.C."/>
            <person name="Ainscough R."/>
            <person name="Ambrose K.D."/>
            <person name="Ansari-Lari M.A."/>
            <person name="Aradhya S."/>
            <person name="Ashwell R.I."/>
            <person name="Babbage A.K."/>
            <person name="Bagguley C.L."/>
            <person name="Ballabio A."/>
            <person name="Banerjee R."/>
            <person name="Barker G.E."/>
            <person name="Barlow K.F."/>
            <person name="Barrett I.P."/>
            <person name="Bates K.N."/>
            <person name="Beare D.M."/>
            <person name="Beasley H."/>
            <person name="Beasley O."/>
            <person name="Beck A."/>
            <person name="Bethel G."/>
            <person name="Blechschmidt K."/>
            <person name="Brady N."/>
            <person name="Bray-Allen S."/>
            <person name="Bridgeman A.M."/>
            <person name="Brown A.J."/>
            <person name="Brown M.J."/>
            <person name="Bonnin D."/>
            <person name="Bruford E.A."/>
            <person name="Buhay C."/>
            <person name="Burch P."/>
            <person name="Burford D."/>
            <person name="Burgess J."/>
            <person name="Burrill W."/>
            <person name="Burton J."/>
            <person name="Bye J.M."/>
            <person name="Carder C."/>
            <person name="Carrel L."/>
            <person name="Chako J."/>
            <person name="Chapman J.C."/>
            <person name="Chavez D."/>
            <person name="Chen E."/>
            <person name="Chen G."/>
            <person name="Chen Y."/>
            <person name="Chen Z."/>
            <person name="Chinault C."/>
            <person name="Ciccodicola A."/>
            <person name="Clark S.Y."/>
            <person name="Clarke G."/>
            <person name="Clee C.M."/>
            <person name="Clegg S."/>
            <person name="Clerc-Blankenburg K."/>
            <person name="Clifford K."/>
            <person name="Cobley V."/>
            <person name="Cole C.G."/>
            <person name="Conquer J.S."/>
            <person name="Corby N."/>
            <person name="Connor R.E."/>
            <person name="David R."/>
            <person name="Davies J."/>
            <person name="Davis C."/>
            <person name="Davis J."/>
            <person name="Delgado O."/>
            <person name="Deshazo D."/>
            <person name="Dhami P."/>
            <person name="Ding Y."/>
            <person name="Dinh H."/>
            <person name="Dodsworth S."/>
            <person name="Draper H."/>
            <person name="Dugan-Rocha S."/>
            <person name="Dunham A."/>
            <person name="Dunn M."/>
            <person name="Durbin K.J."/>
            <person name="Dutta I."/>
            <person name="Eades T."/>
            <person name="Ellwood M."/>
            <person name="Emery-Cohen A."/>
            <person name="Errington H."/>
            <person name="Evans K.L."/>
            <person name="Faulkner L."/>
            <person name="Francis F."/>
            <person name="Frankland J."/>
            <person name="Fraser A.E."/>
            <person name="Galgoczy P."/>
            <person name="Gilbert J."/>
            <person name="Gill R."/>
            <person name="Gloeckner G."/>
            <person name="Gregory S.G."/>
            <person name="Gribble S."/>
            <person name="Griffiths C."/>
            <person name="Grocock R."/>
            <person name="Gu Y."/>
            <person name="Gwilliam R."/>
            <person name="Hamilton C."/>
            <person name="Hart E.A."/>
            <person name="Hawes A."/>
            <person name="Heath P.D."/>
            <person name="Heitmann K."/>
            <person name="Hennig S."/>
            <person name="Hernandez J."/>
            <person name="Hinzmann B."/>
            <person name="Ho S."/>
            <person name="Hoffs M."/>
            <person name="Howden P.J."/>
            <person name="Huckle E.J."/>
            <person name="Hume J."/>
            <person name="Hunt P.J."/>
            <person name="Hunt A.R."/>
            <person name="Isherwood J."/>
            <person name="Jacob L."/>
            <person name="Johnson D."/>
            <person name="Jones S."/>
            <person name="de Jong P.J."/>
            <person name="Joseph S.S."/>
            <person name="Keenan S."/>
            <person name="Kelly S."/>
            <person name="Kershaw J.K."/>
            <person name="Khan Z."/>
            <person name="Kioschis P."/>
            <person name="Klages S."/>
            <person name="Knights A.J."/>
            <person name="Kosiura A."/>
            <person name="Kovar-Smith C."/>
            <person name="Laird G.K."/>
            <person name="Langford C."/>
            <person name="Lawlor S."/>
            <person name="Leversha M."/>
            <person name="Lewis L."/>
            <person name="Liu W."/>
            <person name="Lloyd C."/>
            <person name="Lloyd D.M."/>
            <person name="Loulseged H."/>
            <person name="Loveland J.E."/>
            <person name="Lovell J.D."/>
            <person name="Lozado R."/>
            <person name="Lu J."/>
            <person name="Lyne R."/>
            <person name="Ma J."/>
            <person name="Maheshwari M."/>
            <person name="Matthews L.H."/>
            <person name="McDowall J."/>
            <person name="McLaren S."/>
            <person name="McMurray A."/>
            <person name="Meidl P."/>
            <person name="Meitinger T."/>
            <person name="Milne S."/>
            <person name="Miner G."/>
            <person name="Mistry S.L."/>
            <person name="Morgan M."/>
            <person name="Morris S."/>
            <person name="Mueller I."/>
            <person name="Mullikin J.C."/>
            <person name="Nguyen N."/>
            <person name="Nordsiek G."/>
            <person name="Nyakatura G."/>
            <person name="O'dell C.N."/>
            <person name="Okwuonu G."/>
            <person name="Palmer S."/>
            <person name="Pandian R."/>
            <person name="Parker D."/>
            <person name="Parrish J."/>
            <person name="Pasternak S."/>
            <person name="Patel D."/>
            <person name="Pearce A.V."/>
            <person name="Pearson D.M."/>
            <person name="Pelan S.E."/>
            <person name="Perez L."/>
            <person name="Porter K.M."/>
            <person name="Ramsey Y."/>
            <person name="Reichwald K."/>
            <person name="Rhodes S."/>
            <person name="Ridler K.A."/>
            <person name="Schlessinger D."/>
            <person name="Schueler M.G."/>
            <person name="Sehra H.K."/>
            <person name="Shaw-Smith C."/>
            <person name="Shen H."/>
            <person name="Sheridan E.M."/>
            <person name="Shownkeen R."/>
            <person name="Skuce C.D."/>
            <person name="Smith M.L."/>
            <person name="Sotheran E.C."/>
            <person name="Steingruber H.E."/>
            <person name="Steward C.A."/>
            <person name="Storey R."/>
            <person name="Swann R.M."/>
            <person name="Swarbreck D."/>
            <person name="Tabor P.E."/>
            <person name="Taudien S."/>
            <person name="Taylor T."/>
            <person name="Teague B."/>
            <person name="Thomas K."/>
            <person name="Thorpe A."/>
            <person name="Timms K."/>
            <person name="Tracey A."/>
            <person name="Trevanion S."/>
            <person name="Tromans A.C."/>
            <person name="d'Urso M."/>
            <person name="Verduzco D."/>
            <person name="Villasana D."/>
            <person name="Waldron L."/>
            <person name="Wall M."/>
            <person name="Wang Q."/>
            <person name="Warren J."/>
            <person name="Warry G.L."/>
            <person name="Wei X."/>
            <person name="West A."/>
            <person name="Whitehead S.L."/>
            <person name="Whiteley M.N."/>
            <person name="Wilkinson J.E."/>
            <person name="Willey D.L."/>
            <person name="Williams G."/>
            <person name="Williams L."/>
            <person name="Williamson A."/>
            <person name="Williamson H."/>
            <person name="Wilming L."/>
            <person name="Woodmansey R.L."/>
            <person name="Wray P.W."/>
            <person name="Yen J."/>
            <person name="Zhang J."/>
            <person name="Zhou J."/>
            <person name="Zoghbi H."/>
            <person name="Zorilla S."/>
            <person name="Buck D."/>
            <person name="Reinhardt R."/>
            <person name="Poustka A."/>
            <person name="Rosenthal A."/>
            <person name="Lehrach H."/>
            <person name="Meindl A."/>
            <person name="Minx P.J."/>
            <person name="Hillier L.W."/>
            <person name="Willard H.F."/>
            <person name="Wilson R.K."/>
            <person name="Waterston R.H."/>
            <person name="Rice C.M."/>
            <person name="Vaudin M."/>
            <person name="Coulson A."/>
            <person name="Nelson D.L."/>
            <person name="Weinstock G."/>
            <person name="Sulston J.E."/>
            <person name="Durbin R.M."/>
            <person name="Hubbard T."/>
            <person name="Gibbs R.A."/>
            <person name="Beck S."/>
            <person name="Rogers J."/>
            <person name="Bentley D.R."/>
        </authorList>
    </citation>
    <scope>NUCLEOTIDE SEQUENCE [LARGE SCALE GENOMIC DNA]</scope>
</reference>
<feature type="chain" id="PRO_0000285538" description="Sperm protein associated with the nucleus on the X chromosome N1">
    <location>
        <begin position="1"/>
        <end position="72"/>
    </location>
</feature>
<feature type="region of interest" description="Disordered" evidence="1">
    <location>
        <begin position="1"/>
        <end position="44"/>
    </location>
</feature>